<keyword id="KW-0131">Cell cycle</keyword>
<keyword id="KW-0132">Cell division</keyword>
<keyword id="KW-1003">Cell membrane</keyword>
<keyword id="KW-0133">Cell shape</keyword>
<keyword id="KW-0961">Cell wall biogenesis/degradation</keyword>
<keyword id="KW-0460">Magnesium</keyword>
<keyword id="KW-0472">Membrane</keyword>
<keyword id="KW-0479">Metal-binding</keyword>
<keyword id="KW-0573">Peptidoglycan synthesis</keyword>
<keyword id="KW-1185">Reference proteome</keyword>
<keyword id="KW-0808">Transferase</keyword>
<keyword id="KW-0812">Transmembrane</keyword>
<keyword id="KW-1133">Transmembrane helix</keyword>
<feature type="chain" id="PRO_1000003053" description="Phospho-N-acetylmuramoyl-pentapeptide-transferase">
    <location>
        <begin position="1"/>
        <end position="360"/>
    </location>
</feature>
<feature type="transmembrane region" description="Helical" evidence="1">
    <location>
        <begin position="3"/>
        <end position="23"/>
    </location>
</feature>
<feature type="transmembrane region" description="Helical" evidence="1">
    <location>
        <begin position="52"/>
        <end position="72"/>
    </location>
</feature>
<feature type="transmembrane region" description="Helical" evidence="1">
    <location>
        <begin position="81"/>
        <end position="101"/>
    </location>
</feature>
<feature type="transmembrane region" description="Helical" evidence="1">
    <location>
        <begin position="115"/>
        <end position="135"/>
    </location>
</feature>
<feature type="transmembrane region" description="Helical" evidence="1">
    <location>
        <begin position="153"/>
        <end position="173"/>
    </location>
</feature>
<feature type="transmembrane region" description="Helical" evidence="1">
    <location>
        <begin position="187"/>
        <end position="207"/>
    </location>
</feature>
<feature type="transmembrane region" description="Helical" evidence="1">
    <location>
        <begin position="230"/>
        <end position="250"/>
    </location>
</feature>
<feature type="transmembrane region" description="Helical" evidence="1">
    <location>
        <begin position="254"/>
        <end position="274"/>
    </location>
</feature>
<feature type="transmembrane region" description="Helical" evidence="1">
    <location>
        <begin position="282"/>
        <end position="302"/>
    </location>
</feature>
<feature type="transmembrane region" description="Helical" evidence="1">
    <location>
        <begin position="333"/>
        <end position="353"/>
    </location>
</feature>
<proteinExistence type="inferred from homology"/>
<reference key="1">
    <citation type="journal article" date="2007" name="Nat. Biotechnol.">
        <title>Complete genome sequence of the erythromycin-producing bacterium Saccharopolyspora erythraea NRRL23338.</title>
        <authorList>
            <person name="Oliynyk M."/>
            <person name="Samborskyy M."/>
            <person name="Lester J.B."/>
            <person name="Mironenko T."/>
            <person name="Scott N."/>
            <person name="Dickens S."/>
            <person name="Haydock S.F."/>
            <person name="Leadlay P.F."/>
        </authorList>
    </citation>
    <scope>NUCLEOTIDE SEQUENCE [LARGE SCALE GENOMIC DNA]</scope>
    <source>
        <strain>ATCC 11635 / DSM 40517 / JCM 4748 / NBRC 13426 / NCIMB 8594 / NRRL 2338</strain>
    </source>
</reference>
<accession>A4FLW3</accession>
<comment type="function">
    <text evidence="1">Catalyzes the initial step of the lipid cycle reactions in the biosynthesis of the cell wall peptidoglycan: transfers peptidoglycan precursor phospho-MurNAc-pentapeptide from UDP-MurNAc-pentapeptide onto the lipid carrier undecaprenyl phosphate, yielding undecaprenyl-pyrophosphoryl-MurNAc-pentapeptide, known as lipid I.</text>
</comment>
<comment type="catalytic activity">
    <reaction evidence="1">
        <text>UDP-N-acetyl-alpha-D-muramoyl-L-alanyl-gamma-D-glutamyl-meso-2,6-diaminopimeloyl-D-alanyl-D-alanine + di-trans,octa-cis-undecaprenyl phosphate = di-trans,octa-cis-undecaprenyl diphospho-N-acetyl-alpha-D-muramoyl-L-alanyl-D-glutamyl-meso-2,6-diaminopimeloyl-D-alanyl-D-alanine + UMP</text>
        <dbReference type="Rhea" id="RHEA:28386"/>
        <dbReference type="ChEBI" id="CHEBI:57865"/>
        <dbReference type="ChEBI" id="CHEBI:60392"/>
        <dbReference type="ChEBI" id="CHEBI:61386"/>
        <dbReference type="ChEBI" id="CHEBI:61387"/>
        <dbReference type="EC" id="2.7.8.13"/>
    </reaction>
</comment>
<comment type="cofactor">
    <cofactor evidence="1">
        <name>Mg(2+)</name>
        <dbReference type="ChEBI" id="CHEBI:18420"/>
    </cofactor>
</comment>
<comment type="pathway">
    <text evidence="1">Cell wall biogenesis; peptidoglycan biosynthesis.</text>
</comment>
<comment type="subcellular location">
    <subcellularLocation>
        <location evidence="1">Cell membrane</location>
        <topology evidence="1">Multi-pass membrane protein</topology>
    </subcellularLocation>
</comment>
<comment type="similarity">
    <text evidence="1">Belongs to the glycosyltransferase 4 family. MraY subfamily.</text>
</comment>
<organism>
    <name type="scientific">Saccharopolyspora erythraea (strain ATCC 11635 / DSM 40517 / JCM 4748 / NBRC 13426 / NCIMB 8594 / NRRL 2338)</name>
    <dbReference type="NCBI Taxonomy" id="405948"/>
    <lineage>
        <taxon>Bacteria</taxon>
        <taxon>Bacillati</taxon>
        <taxon>Actinomycetota</taxon>
        <taxon>Actinomycetes</taxon>
        <taxon>Pseudonocardiales</taxon>
        <taxon>Pseudonocardiaceae</taxon>
        <taxon>Saccharopolyspora</taxon>
    </lineage>
</organism>
<evidence type="ECO:0000255" key="1">
    <source>
        <dbReference type="HAMAP-Rule" id="MF_00038"/>
    </source>
</evidence>
<name>MRAY_SACEN</name>
<protein>
    <recommendedName>
        <fullName evidence="1">Phospho-N-acetylmuramoyl-pentapeptide-transferase</fullName>
        <ecNumber evidence="1">2.7.8.13</ecNumber>
    </recommendedName>
    <alternativeName>
        <fullName evidence="1">UDP-MurNAc-pentapeptide phosphotransferase</fullName>
    </alternativeName>
</protein>
<dbReference type="EC" id="2.7.8.13" evidence="1"/>
<dbReference type="EMBL" id="AM420293">
    <property type="protein sequence ID" value="CAM05038.1"/>
    <property type="molecule type" value="Genomic_DNA"/>
</dbReference>
<dbReference type="RefSeq" id="WP_009943137.1">
    <property type="nucleotide sequence ID" value="NC_009142.1"/>
</dbReference>
<dbReference type="SMR" id="A4FLW3"/>
<dbReference type="STRING" id="405948.SACE_5854"/>
<dbReference type="KEGG" id="sen:SACE_5854"/>
<dbReference type="eggNOG" id="COG0472">
    <property type="taxonomic scope" value="Bacteria"/>
</dbReference>
<dbReference type="HOGENOM" id="CLU_023982_0_1_11"/>
<dbReference type="OrthoDB" id="9805475at2"/>
<dbReference type="UniPathway" id="UPA00219"/>
<dbReference type="Proteomes" id="UP000006728">
    <property type="component" value="Chromosome"/>
</dbReference>
<dbReference type="GO" id="GO:0005886">
    <property type="term" value="C:plasma membrane"/>
    <property type="evidence" value="ECO:0007669"/>
    <property type="project" value="UniProtKB-SubCell"/>
</dbReference>
<dbReference type="GO" id="GO:0046872">
    <property type="term" value="F:metal ion binding"/>
    <property type="evidence" value="ECO:0007669"/>
    <property type="project" value="UniProtKB-KW"/>
</dbReference>
<dbReference type="GO" id="GO:0008963">
    <property type="term" value="F:phospho-N-acetylmuramoyl-pentapeptide-transferase activity"/>
    <property type="evidence" value="ECO:0007669"/>
    <property type="project" value="UniProtKB-UniRule"/>
</dbReference>
<dbReference type="GO" id="GO:0051992">
    <property type="term" value="F:UDP-N-acetylmuramoyl-L-alanyl-D-glutamyl-meso-2,6-diaminopimelyl-D-alanyl-D-alanine:undecaprenyl-phosphate transferase activity"/>
    <property type="evidence" value="ECO:0007669"/>
    <property type="project" value="RHEA"/>
</dbReference>
<dbReference type="GO" id="GO:0051301">
    <property type="term" value="P:cell division"/>
    <property type="evidence" value="ECO:0007669"/>
    <property type="project" value="UniProtKB-KW"/>
</dbReference>
<dbReference type="GO" id="GO:0071555">
    <property type="term" value="P:cell wall organization"/>
    <property type="evidence" value="ECO:0007669"/>
    <property type="project" value="UniProtKB-KW"/>
</dbReference>
<dbReference type="GO" id="GO:0009252">
    <property type="term" value="P:peptidoglycan biosynthetic process"/>
    <property type="evidence" value="ECO:0007669"/>
    <property type="project" value="UniProtKB-UniRule"/>
</dbReference>
<dbReference type="GO" id="GO:0008360">
    <property type="term" value="P:regulation of cell shape"/>
    <property type="evidence" value="ECO:0007669"/>
    <property type="project" value="UniProtKB-KW"/>
</dbReference>
<dbReference type="CDD" id="cd06852">
    <property type="entry name" value="GT_MraY"/>
    <property type="match status" value="1"/>
</dbReference>
<dbReference type="HAMAP" id="MF_00038">
    <property type="entry name" value="MraY"/>
    <property type="match status" value="1"/>
</dbReference>
<dbReference type="InterPro" id="IPR000715">
    <property type="entry name" value="Glycosyl_transferase_4"/>
</dbReference>
<dbReference type="InterPro" id="IPR003524">
    <property type="entry name" value="PNAcMuramoyl-5peptid_Trfase"/>
</dbReference>
<dbReference type="InterPro" id="IPR018480">
    <property type="entry name" value="PNAcMuramoyl-5peptid_Trfase_CS"/>
</dbReference>
<dbReference type="NCBIfam" id="TIGR00445">
    <property type="entry name" value="mraY"/>
    <property type="match status" value="1"/>
</dbReference>
<dbReference type="PANTHER" id="PTHR22926">
    <property type="entry name" value="PHOSPHO-N-ACETYLMURAMOYL-PENTAPEPTIDE-TRANSFERASE"/>
    <property type="match status" value="1"/>
</dbReference>
<dbReference type="PANTHER" id="PTHR22926:SF5">
    <property type="entry name" value="PHOSPHO-N-ACETYLMURAMOYL-PENTAPEPTIDE-TRANSFERASE HOMOLOG"/>
    <property type="match status" value="1"/>
</dbReference>
<dbReference type="Pfam" id="PF00953">
    <property type="entry name" value="Glycos_transf_4"/>
    <property type="match status" value="1"/>
</dbReference>
<dbReference type="Pfam" id="PF10555">
    <property type="entry name" value="MraY_sig1"/>
    <property type="match status" value="1"/>
</dbReference>
<dbReference type="PROSITE" id="PS01347">
    <property type="entry name" value="MRAY_1"/>
    <property type="match status" value="1"/>
</dbReference>
<dbReference type="PROSITE" id="PS01348">
    <property type="entry name" value="MRAY_2"/>
    <property type="match status" value="1"/>
</dbReference>
<sequence length="360" mass="38748">MKSILVGAAVALVVSILFTPYLIRVFSRQGFGQEIREEVQQSHAAKRGTPTMGGVAILVAMWAGYLVAHLTVTDEPPTASGLLVLGLTTALGIVGFLDDFIKIRKQRNLGLNKTAKLVGQLVASVLFAVLAMQFANQNGITPASEHLSFIRDITVISFGSVGFVIFAYIAISGWSNAVNFTDGMDGLAGGTAAMVLAIYVVISFWQFRNNCSAPNGPALACYTVRDPLDIALVAGAAMAACVGFLWWNAAPAKIFMGDTGSLALGGLLAGLSMVTRTELLMIIIGGLFVVEALSVVMQIVVFRSTRRRLFRMAPFHHHFELAGWAETTVIIRFWVLAAISAMFGLGLFYADWLSLAREFF</sequence>
<gene>
    <name evidence="1" type="primary">mraY</name>
    <name type="ordered locus">SACE_5854</name>
</gene>